<accession>Q8X800</accession>
<proteinExistence type="inferred from homology"/>
<name>METI_ECO57</name>
<reference key="1">
    <citation type="journal article" date="2001" name="Nature">
        <title>Genome sequence of enterohaemorrhagic Escherichia coli O157:H7.</title>
        <authorList>
            <person name="Perna N.T."/>
            <person name="Plunkett G. III"/>
            <person name="Burland V."/>
            <person name="Mau B."/>
            <person name="Glasner J.D."/>
            <person name="Rose D.J."/>
            <person name="Mayhew G.F."/>
            <person name="Evans P.S."/>
            <person name="Gregor J."/>
            <person name="Kirkpatrick H.A."/>
            <person name="Posfai G."/>
            <person name="Hackett J."/>
            <person name="Klink S."/>
            <person name="Boutin A."/>
            <person name="Shao Y."/>
            <person name="Miller L."/>
            <person name="Grotbeck E.J."/>
            <person name="Davis N.W."/>
            <person name="Lim A."/>
            <person name="Dimalanta E.T."/>
            <person name="Potamousis K."/>
            <person name="Apodaca J."/>
            <person name="Anantharaman T.S."/>
            <person name="Lin J."/>
            <person name="Yen G."/>
            <person name="Schwartz D.C."/>
            <person name="Welch R.A."/>
            <person name="Blattner F.R."/>
        </authorList>
    </citation>
    <scope>NUCLEOTIDE SEQUENCE [LARGE SCALE GENOMIC DNA]</scope>
    <source>
        <strain>O157:H7 / EDL933 / ATCC 700927 / EHEC</strain>
    </source>
</reference>
<reference key="2">
    <citation type="journal article" date="2001" name="DNA Res.">
        <title>Complete genome sequence of enterohemorrhagic Escherichia coli O157:H7 and genomic comparison with a laboratory strain K-12.</title>
        <authorList>
            <person name="Hayashi T."/>
            <person name="Makino K."/>
            <person name="Ohnishi M."/>
            <person name="Kurokawa K."/>
            <person name="Ishii K."/>
            <person name="Yokoyama K."/>
            <person name="Han C.-G."/>
            <person name="Ohtsubo E."/>
            <person name="Nakayama K."/>
            <person name="Murata T."/>
            <person name="Tanaka M."/>
            <person name="Tobe T."/>
            <person name="Iida T."/>
            <person name="Takami H."/>
            <person name="Honda T."/>
            <person name="Sasakawa C."/>
            <person name="Ogasawara N."/>
            <person name="Yasunaga T."/>
            <person name="Kuhara S."/>
            <person name="Shiba T."/>
            <person name="Hattori M."/>
            <person name="Shinagawa H."/>
        </authorList>
    </citation>
    <scope>NUCLEOTIDE SEQUENCE [LARGE SCALE GENOMIC DNA]</scope>
    <source>
        <strain>O157:H7 / Sakai / RIMD 0509952 / EHEC</strain>
    </source>
</reference>
<gene>
    <name type="primary">metI</name>
    <name type="ordered locus">Z0210</name>
    <name type="ordered locus">ECs0200</name>
</gene>
<feature type="chain" id="PRO_0000060099" description="D-methionine transport system permease protein MetI">
    <location>
        <begin position="1"/>
        <end position="217"/>
    </location>
</feature>
<feature type="topological domain" description="Periplasmic" evidence="2">
    <location>
        <begin position="1"/>
        <end position="19"/>
    </location>
</feature>
<feature type="transmembrane region" description="Helical" evidence="3">
    <location>
        <begin position="20"/>
        <end position="40"/>
    </location>
</feature>
<feature type="topological domain" description="Cytoplasmic" evidence="2">
    <location>
        <begin position="41"/>
        <end position="57"/>
    </location>
</feature>
<feature type="transmembrane region" description="Helical" evidence="3">
    <location>
        <begin position="58"/>
        <end position="78"/>
    </location>
</feature>
<feature type="topological domain" description="Periplasmic" evidence="2">
    <location>
        <begin position="79"/>
        <end position="80"/>
    </location>
</feature>
<feature type="transmembrane region" description="Helical" evidence="3">
    <location>
        <begin position="81"/>
        <end position="101"/>
    </location>
</feature>
<feature type="topological domain" description="Cytoplasmic" evidence="2">
    <location>
        <begin position="102"/>
        <end position="151"/>
    </location>
</feature>
<feature type="transmembrane region" description="Helical" evidence="3">
    <location>
        <begin position="152"/>
        <end position="172"/>
    </location>
</feature>
<feature type="topological domain" description="Periplasmic" evidence="2">
    <location>
        <begin position="173"/>
        <end position="185"/>
    </location>
</feature>
<feature type="transmembrane region" description="Helical" evidence="3">
    <location>
        <begin position="186"/>
        <end position="206"/>
    </location>
</feature>
<feature type="topological domain" description="Cytoplasmic" evidence="2">
    <location>
        <begin position="207"/>
        <end position="217"/>
    </location>
</feature>
<feature type="domain" description="ABC transmembrane type-1" evidence="3">
    <location>
        <begin position="13"/>
        <end position="204"/>
    </location>
</feature>
<organism>
    <name type="scientific">Escherichia coli O157:H7</name>
    <dbReference type="NCBI Taxonomy" id="83334"/>
    <lineage>
        <taxon>Bacteria</taxon>
        <taxon>Pseudomonadati</taxon>
        <taxon>Pseudomonadota</taxon>
        <taxon>Gammaproteobacteria</taxon>
        <taxon>Enterobacterales</taxon>
        <taxon>Enterobacteriaceae</taxon>
        <taxon>Escherichia</taxon>
    </lineage>
</organism>
<dbReference type="EMBL" id="AE005174">
    <property type="protein sequence ID" value="AAG54500.1"/>
    <property type="molecule type" value="Genomic_DNA"/>
</dbReference>
<dbReference type="EMBL" id="BA000007">
    <property type="protein sequence ID" value="BAB33623.1"/>
    <property type="molecule type" value="Genomic_DNA"/>
</dbReference>
<dbReference type="PIR" id="H85504">
    <property type="entry name" value="H85504"/>
</dbReference>
<dbReference type="PIR" id="H90653">
    <property type="entry name" value="H90653"/>
</dbReference>
<dbReference type="RefSeq" id="NP_308227.1">
    <property type="nucleotide sequence ID" value="NC_002695.1"/>
</dbReference>
<dbReference type="RefSeq" id="WP_001294606.1">
    <property type="nucleotide sequence ID" value="NZ_VOAI01000002.1"/>
</dbReference>
<dbReference type="SMR" id="Q8X800"/>
<dbReference type="STRING" id="155864.Z0210"/>
<dbReference type="GeneID" id="913960"/>
<dbReference type="KEGG" id="ece:Z0210"/>
<dbReference type="KEGG" id="ecs:ECs_0200"/>
<dbReference type="PATRIC" id="fig|386585.9.peg.304"/>
<dbReference type="eggNOG" id="COG2011">
    <property type="taxonomic scope" value="Bacteria"/>
</dbReference>
<dbReference type="HOGENOM" id="CLU_077375_0_1_6"/>
<dbReference type="OMA" id="TFWSAIF"/>
<dbReference type="Proteomes" id="UP000000558">
    <property type="component" value="Chromosome"/>
</dbReference>
<dbReference type="Proteomes" id="UP000002519">
    <property type="component" value="Chromosome"/>
</dbReference>
<dbReference type="GO" id="GO:0005886">
    <property type="term" value="C:plasma membrane"/>
    <property type="evidence" value="ECO:0007669"/>
    <property type="project" value="UniProtKB-SubCell"/>
</dbReference>
<dbReference type="GO" id="GO:0048473">
    <property type="term" value="P:D-methionine transmembrane transport"/>
    <property type="evidence" value="ECO:0007669"/>
    <property type="project" value="TreeGrafter"/>
</dbReference>
<dbReference type="CDD" id="cd06261">
    <property type="entry name" value="TM_PBP2"/>
    <property type="match status" value="1"/>
</dbReference>
<dbReference type="FunFam" id="1.10.3720.10:FF:000002">
    <property type="entry name" value="D-methionine ABC transporter permease MetI"/>
    <property type="match status" value="1"/>
</dbReference>
<dbReference type="Gene3D" id="1.10.3720.10">
    <property type="entry name" value="MetI-like"/>
    <property type="match status" value="1"/>
</dbReference>
<dbReference type="InterPro" id="IPR051322">
    <property type="entry name" value="AA_ABC_Transporter_Permease"/>
</dbReference>
<dbReference type="InterPro" id="IPR000515">
    <property type="entry name" value="MetI-like"/>
</dbReference>
<dbReference type="InterPro" id="IPR035906">
    <property type="entry name" value="MetI-like_sf"/>
</dbReference>
<dbReference type="NCBIfam" id="NF008049">
    <property type="entry name" value="PRK10782.1"/>
    <property type="match status" value="1"/>
</dbReference>
<dbReference type="PANTHER" id="PTHR30450">
    <property type="entry name" value="ABC TRANSPORTER PERMEASE"/>
    <property type="match status" value="1"/>
</dbReference>
<dbReference type="PANTHER" id="PTHR30450:SF8">
    <property type="entry name" value="D-METHIONINE TRANSPORT SYSTEM PERMEASE PROTEIN METI"/>
    <property type="match status" value="1"/>
</dbReference>
<dbReference type="Pfam" id="PF00528">
    <property type="entry name" value="BPD_transp_1"/>
    <property type="match status" value="1"/>
</dbReference>
<dbReference type="SUPFAM" id="SSF161098">
    <property type="entry name" value="MetI-like"/>
    <property type="match status" value="1"/>
</dbReference>
<dbReference type="PROSITE" id="PS50928">
    <property type="entry name" value="ABC_TM1"/>
    <property type="match status" value="1"/>
</dbReference>
<comment type="function">
    <text evidence="1">Part of the binding-protein-dependent transport system for D-methionine and the toxic methionine analog alpha-methyl-methionine. Probably responsible for the translocation of the substrate across the membrane (By similarity).</text>
</comment>
<comment type="subcellular location">
    <subcellularLocation>
        <location evidence="1">Cell inner membrane</location>
        <topology evidence="3">Multi-pass membrane protein</topology>
    </subcellularLocation>
</comment>
<comment type="similarity">
    <text evidence="4">Belongs to the binding-protein-dependent transport system permease family. CysTW subfamily.</text>
</comment>
<evidence type="ECO:0000250" key="1"/>
<evidence type="ECO:0000255" key="2"/>
<evidence type="ECO:0000255" key="3">
    <source>
        <dbReference type="PROSITE-ProRule" id="PRU00441"/>
    </source>
</evidence>
<evidence type="ECO:0000305" key="4"/>
<protein>
    <recommendedName>
        <fullName>D-methionine transport system permease protein MetI</fullName>
    </recommendedName>
</protein>
<sequence>MSEPMMWLLVRGVWETLAMTFVSGFFGFVVGLPVGVLLYVTRPGQIIANAKLYRTVSAIVNIFRSIPFIILLVWMIPFTRVIVGTSIGLQAAIVPLTVGAAPFIARMVENALLEIPTGLIEASRAMGATPMQIVRKVLLPEALPGLVNAATITLITLVGYSAMGGAVGAGGLGQIGYQYGYIGYNATVMNTVLVLLVILVYLIQFAGDRIVRAVTRK</sequence>
<keyword id="KW-0029">Amino-acid transport</keyword>
<keyword id="KW-0997">Cell inner membrane</keyword>
<keyword id="KW-1003">Cell membrane</keyword>
<keyword id="KW-0472">Membrane</keyword>
<keyword id="KW-1185">Reference proteome</keyword>
<keyword id="KW-0812">Transmembrane</keyword>
<keyword id="KW-1133">Transmembrane helix</keyword>
<keyword id="KW-0813">Transport</keyword>